<gene>
    <name evidence="1" type="primary">rlmD</name>
    <name type="synonym">rumA</name>
    <name type="ordered locus">VFMJ11_2186</name>
</gene>
<reference key="1">
    <citation type="submission" date="2008-08" db="EMBL/GenBank/DDBJ databases">
        <title>Complete sequence of Vibrio fischeri strain MJ11.</title>
        <authorList>
            <person name="Mandel M.J."/>
            <person name="Stabb E.V."/>
            <person name="Ruby E.G."/>
            <person name="Ferriera S."/>
            <person name="Johnson J."/>
            <person name="Kravitz S."/>
            <person name="Beeson K."/>
            <person name="Sutton G."/>
            <person name="Rogers Y.-H."/>
            <person name="Friedman R."/>
            <person name="Frazier M."/>
            <person name="Venter J.C."/>
        </authorList>
    </citation>
    <scope>NUCLEOTIDE SEQUENCE [LARGE SCALE GENOMIC DNA]</scope>
    <source>
        <strain>MJ11</strain>
    </source>
</reference>
<sequence>MAQFFKPKKKASVNTKHLSVDVVRLDHNGAGIAFVDKKPVFIEGALPGEKAIIQFIEQKKQFSRAKLIKLAQKSEKRQTPICQHYHECGGCNLQHLQHEEQIVAKNEKLQELMKKQGVSQGEMVQPIMGEELSYRRRARISLMINKQTNQLDFGFRKKQSKAIVNVRHCPVLVQELDQHLESLFTLLNQLKGKKNLGHVELVQADNGSVLLIRHVADFNEKDHQALVNYCEERNLILYLMPEADVLNHVRGEEPFYLIDGTKIYFTPKDFIQVNRKVNEQMVEQALSWLDLNENDSVLDLFCGLGNFSLPLAKKVKTVVGIEGVDDMVQRAKLNAERNHLSNVSFYQANLEEEASDQVWASTKFTKILLDPARAGAAGVMETVAKLKPQTVVYVSCNPATLARDSQLLIQHGFKLTRLGMLDMFPHTGHLESMALFER</sequence>
<protein>
    <recommendedName>
        <fullName evidence="1">23S rRNA (uracil(1939)-C(5))-methyltransferase RlmD</fullName>
        <ecNumber evidence="1">2.1.1.190</ecNumber>
    </recommendedName>
    <alternativeName>
        <fullName evidence="1">23S rRNA(m5U1939)-methyltransferase</fullName>
    </alternativeName>
</protein>
<dbReference type="EC" id="2.1.1.190" evidence="1"/>
<dbReference type="EMBL" id="CP001139">
    <property type="protein sequence ID" value="ACH67211.1"/>
    <property type="molecule type" value="Genomic_DNA"/>
</dbReference>
<dbReference type="RefSeq" id="WP_012534274.1">
    <property type="nucleotide sequence ID" value="NC_011184.1"/>
</dbReference>
<dbReference type="SMR" id="B5FAG4"/>
<dbReference type="KEGG" id="vfm:VFMJ11_2186"/>
<dbReference type="HOGENOM" id="CLU_014689_8_2_6"/>
<dbReference type="Proteomes" id="UP000001857">
    <property type="component" value="Chromosome I"/>
</dbReference>
<dbReference type="GO" id="GO:0051539">
    <property type="term" value="F:4 iron, 4 sulfur cluster binding"/>
    <property type="evidence" value="ECO:0007669"/>
    <property type="project" value="UniProtKB-KW"/>
</dbReference>
<dbReference type="GO" id="GO:0005506">
    <property type="term" value="F:iron ion binding"/>
    <property type="evidence" value="ECO:0007669"/>
    <property type="project" value="UniProtKB-UniRule"/>
</dbReference>
<dbReference type="GO" id="GO:0003723">
    <property type="term" value="F:RNA binding"/>
    <property type="evidence" value="ECO:0007669"/>
    <property type="project" value="InterPro"/>
</dbReference>
<dbReference type="GO" id="GO:0070041">
    <property type="term" value="F:rRNA (uridine-C5-)-methyltransferase activity"/>
    <property type="evidence" value="ECO:0007669"/>
    <property type="project" value="UniProtKB-UniRule"/>
</dbReference>
<dbReference type="GO" id="GO:0070475">
    <property type="term" value="P:rRNA base methylation"/>
    <property type="evidence" value="ECO:0007669"/>
    <property type="project" value="TreeGrafter"/>
</dbReference>
<dbReference type="CDD" id="cd02440">
    <property type="entry name" value="AdoMet_MTases"/>
    <property type="match status" value="1"/>
</dbReference>
<dbReference type="FunFam" id="3.40.50.150:FF:000009">
    <property type="entry name" value="23S rRNA (Uracil(1939)-C(5))-methyltransferase RlmD"/>
    <property type="match status" value="1"/>
</dbReference>
<dbReference type="FunFam" id="2.40.50.140:FF:000097">
    <property type="entry name" value="23S rRNA (uracil(1939)-C(5))-methyltransferase RlmD"/>
    <property type="match status" value="1"/>
</dbReference>
<dbReference type="Gene3D" id="2.40.50.1070">
    <property type="match status" value="1"/>
</dbReference>
<dbReference type="Gene3D" id="2.40.50.140">
    <property type="entry name" value="Nucleic acid-binding proteins"/>
    <property type="match status" value="1"/>
</dbReference>
<dbReference type="Gene3D" id="3.40.50.150">
    <property type="entry name" value="Vaccinia Virus protein VP39"/>
    <property type="match status" value="1"/>
</dbReference>
<dbReference type="HAMAP" id="MF_01010">
    <property type="entry name" value="23SrRNA_methyltr_RlmD"/>
    <property type="match status" value="1"/>
</dbReference>
<dbReference type="InterPro" id="IPR001566">
    <property type="entry name" value="23S_rRNA_MeTrfase_RlmD"/>
</dbReference>
<dbReference type="InterPro" id="IPR030390">
    <property type="entry name" value="MeTrfase_TrmA_AS"/>
</dbReference>
<dbReference type="InterPro" id="IPR030391">
    <property type="entry name" value="MeTrfase_TrmA_CS"/>
</dbReference>
<dbReference type="InterPro" id="IPR012340">
    <property type="entry name" value="NA-bd_OB-fold"/>
</dbReference>
<dbReference type="InterPro" id="IPR029063">
    <property type="entry name" value="SAM-dependent_MTases_sf"/>
</dbReference>
<dbReference type="InterPro" id="IPR002792">
    <property type="entry name" value="TRAM_dom"/>
</dbReference>
<dbReference type="InterPro" id="IPR010280">
    <property type="entry name" value="U5_MeTrfase_fam"/>
</dbReference>
<dbReference type="NCBIfam" id="NF009639">
    <property type="entry name" value="PRK13168.1"/>
    <property type="match status" value="1"/>
</dbReference>
<dbReference type="NCBIfam" id="TIGR00479">
    <property type="entry name" value="rumA"/>
    <property type="match status" value="1"/>
</dbReference>
<dbReference type="PANTHER" id="PTHR11061:SF49">
    <property type="entry name" value="23S RRNA (URACIL(1939)-C(5))-METHYLTRANSFERASE RLMD"/>
    <property type="match status" value="1"/>
</dbReference>
<dbReference type="PANTHER" id="PTHR11061">
    <property type="entry name" value="RNA M5U METHYLTRANSFERASE"/>
    <property type="match status" value="1"/>
</dbReference>
<dbReference type="Pfam" id="PF01938">
    <property type="entry name" value="TRAM"/>
    <property type="match status" value="1"/>
</dbReference>
<dbReference type="Pfam" id="PF05958">
    <property type="entry name" value="tRNA_U5-meth_tr"/>
    <property type="match status" value="1"/>
</dbReference>
<dbReference type="SUPFAM" id="SSF50249">
    <property type="entry name" value="Nucleic acid-binding proteins"/>
    <property type="match status" value="1"/>
</dbReference>
<dbReference type="SUPFAM" id="SSF53335">
    <property type="entry name" value="S-adenosyl-L-methionine-dependent methyltransferases"/>
    <property type="match status" value="1"/>
</dbReference>
<dbReference type="PROSITE" id="PS51687">
    <property type="entry name" value="SAM_MT_RNA_M5U"/>
    <property type="match status" value="1"/>
</dbReference>
<dbReference type="PROSITE" id="PS50926">
    <property type="entry name" value="TRAM"/>
    <property type="match status" value="1"/>
</dbReference>
<dbReference type="PROSITE" id="PS01230">
    <property type="entry name" value="TRMA_1"/>
    <property type="match status" value="1"/>
</dbReference>
<dbReference type="PROSITE" id="PS01231">
    <property type="entry name" value="TRMA_2"/>
    <property type="match status" value="1"/>
</dbReference>
<comment type="function">
    <text evidence="1">Catalyzes the formation of 5-methyl-uridine at position 1939 (m5U1939) in 23S rRNA.</text>
</comment>
<comment type="catalytic activity">
    <reaction evidence="1">
        <text>uridine(1939) in 23S rRNA + S-adenosyl-L-methionine = 5-methyluridine(1939) in 23S rRNA + S-adenosyl-L-homocysteine + H(+)</text>
        <dbReference type="Rhea" id="RHEA:42908"/>
        <dbReference type="Rhea" id="RHEA-COMP:10278"/>
        <dbReference type="Rhea" id="RHEA-COMP:10279"/>
        <dbReference type="ChEBI" id="CHEBI:15378"/>
        <dbReference type="ChEBI" id="CHEBI:57856"/>
        <dbReference type="ChEBI" id="CHEBI:59789"/>
        <dbReference type="ChEBI" id="CHEBI:65315"/>
        <dbReference type="ChEBI" id="CHEBI:74447"/>
        <dbReference type="EC" id="2.1.1.190"/>
    </reaction>
</comment>
<comment type="similarity">
    <text evidence="1">Belongs to the class I-like SAM-binding methyltransferase superfamily. RNA M5U methyltransferase family. RlmD subfamily.</text>
</comment>
<proteinExistence type="inferred from homology"/>
<keyword id="KW-0004">4Fe-4S</keyword>
<keyword id="KW-0408">Iron</keyword>
<keyword id="KW-0411">Iron-sulfur</keyword>
<keyword id="KW-0479">Metal-binding</keyword>
<keyword id="KW-0489">Methyltransferase</keyword>
<keyword id="KW-0698">rRNA processing</keyword>
<keyword id="KW-0949">S-adenosyl-L-methionine</keyword>
<keyword id="KW-0808">Transferase</keyword>
<accession>B5FAG4</accession>
<feature type="chain" id="PRO_1000200860" description="23S rRNA (uracil(1939)-C(5))-methyltransferase RlmD">
    <location>
        <begin position="1"/>
        <end position="438"/>
    </location>
</feature>
<feature type="domain" description="TRAM" evidence="1">
    <location>
        <begin position="10"/>
        <end position="69"/>
    </location>
</feature>
<feature type="active site" description="Nucleophile" evidence="1">
    <location>
        <position position="396"/>
    </location>
</feature>
<feature type="binding site" evidence="1">
    <location>
        <position position="82"/>
    </location>
    <ligand>
        <name>[4Fe-4S] cluster</name>
        <dbReference type="ChEBI" id="CHEBI:49883"/>
    </ligand>
</feature>
<feature type="binding site" evidence="1">
    <location>
        <position position="88"/>
    </location>
    <ligand>
        <name>[4Fe-4S] cluster</name>
        <dbReference type="ChEBI" id="CHEBI:49883"/>
    </ligand>
</feature>
<feature type="binding site" evidence="1">
    <location>
        <position position="91"/>
    </location>
    <ligand>
        <name>[4Fe-4S] cluster</name>
        <dbReference type="ChEBI" id="CHEBI:49883"/>
    </ligand>
</feature>
<feature type="binding site" evidence="1">
    <location>
        <position position="169"/>
    </location>
    <ligand>
        <name>[4Fe-4S] cluster</name>
        <dbReference type="ChEBI" id="CHEBI:49883"/>
    </ligand>
</feature>
<feature type="binding site" evidence="1">
    <location>
        <position position="272"/>
    </location>
    <ligand>
        <name>S-adenosyl-L-methionine</name>
        <dbReference type="ChEBI" id="CHEBI:59789"/>
    </ligand>
</feature>
<feature type="binding site" evidence="1">
    <location>
        <position position="301"/>
    </location>
    <ligand>
        <name>S-adenosyl-L-methionine</name>
        <dbReference type="ChEBI" id="CHEBI:59789"/>
    </ligand>
</feature>
<feature type="binding site" evidence="1">
    <location>
        <position position="306"/>
    </location>
    <ligand>
        <name>S-adenosyl-L-methionine</name>
        <dbReference type="ChEBI" id="CHEBI:59789"/>
    </ligand>
</feature>
<feature type="binding site" evidence="1">
    <location>
        <position position="322"/>
    </location>
    <ligand>
        <name>S-adenosyl-L-methionine</name>
        <dbReference type="ChEBI" id="CHEBI:59789"/>
    </ligand>
</feature>
<feature type="binding site" evidence="1">
    <location>
        <position position="349"/>
    </location>
    <ligand>
        <name>S-adenosyl-L-methionine</name>
        <dbReference type="ChEBI" id="CHEBI:59789"/>
    </ligand>
</feature>
<feature type="binding site" evidence="1">
    <location>
        <position position="370"/>
    </location>
    <ligand>
        <name>S-adenosyl-L-methionine</name>
        <dbReference type="ChEBI" id="CHEBI:59789"/>
    </ligand>
</feature>
<evidence type="ECO:0000255" key="1">
    <source>
        <dbReference type="HAMAP-Rule" id="MF_01010"/>
    </source>
</evidence>
<organism>
    <name type="scientific">Aliivibrio fischeri (strain MJ11)</name>
    <name type="common">Vibrio fischeri</name>
    <dbReference type="NCBI Taxonomy" id="388396"/>
    <lineage>
        <taxon>Bacteria</taxon>
        <taxon>Pseudomonadati</taxon>
        <taxon>Pseudomonadota</taxon>
        <taxon>Gammaproteobacteria</taxon>
        <taxon>Vibrionales</taxon>
        <taxon>Vibrionaceae</taxon>
        <taxon>Aliivibrio</taxon>
    </lineage>
</organism>
<name>RLMD_ALIFM</name>